<keyword id="KW-0007">Acetylation</keyword>
<keyword id="KW-0965">Cell junction</keyword>
<keyword id="KW-1003">Cell membrane</keyword>
<keyword id="KW-1015">Disulfide bond</keyword>
<keyword id="KW-0256">Endoplasmic reticulum</keyword>
<keyword id="KW-0303">Gap junction</keyword>
<keyword id="KW-1017">Isopeptide bond</keyword>
<keyword id="KW-0472">Membrane</keyword>
<keyword id="KW-0597">Phosphoprotein</keyword>
<keyword id="KW-1185">Reference proteome</keyword>
<keyword id="KW-0702">S-nitrosylation</keyword>
<keyword id="KW-0812">Transmembrane</keyword>
<keyword id="KW-1133">Transmembrane helix</keyword>
<keyword id="KW-0832">Ubl conjugation</keyword>
<feature type="initiator methionine" description="Removed" evidence="1">
    <location>
        <position position="1"/>
    </location>
</feature>
<feature type="chain" id="PRO_0000313000" description="Gap junction alpha-1 protein">
    <location>
        <begin position="2"/>
        <end position="382"/>
    </location>
</feature>
<feature type="topological domain" description="Cytoplasmic" evidence="1">
    <location>
        <begin position="2"/>
        <end position="23"/>
    </location>
</feature>
<feature type="transmembrane region" description="Helical" evidence="5">
    <location>
        <begin position="24"/>
        <end position="44"/>
    </location>
</feature>
<feature type="topological domain" description="Extracellular" evidence="1">
    <location>
        <begin position="45"/>
        <end position="76"/>
    </location>
</feature>
<feature type="transmembrane region" description="Helical" evidence="5">
    <location>
        <begin position="77"/>
        <end position="97"/>
    </location>
</feature>
<feature type="topological domain" description="Cytoplasmic" evidence="1">
    <location>
        <begin position="98"/>
        <end position="155"/>
    </location>
</feature>
<feature type="transmembrane region" description="Helical" evidence="5">
    <location>
        <begin position="156"/>
        <end position="176"/>
    </location>
</feature>
<feature type="topological domain" description="Extracellular" evidence="1">
    <location>
        <begin position="177"/>
        <end position="207"/>
    </location>
</feature>
<feature type="transmembrane region" description="Helical" evidence="5">
    <location>
        <begin position="208"/>
        <end position="228"/>
    </location>
</feature>
<feature type="topological domain" description="Cytoplasmic" evidence="1">
    <location>
        <begin position="229"/>
        <end position="382"/>
    </location>
</feature>
<feature type="region of interest" description="Interaction with NOV" evidence="1">
    <location>
        <begin position="244"/>
        <end position="382"/>
    </location>
</feature>
<feature type="region of interest" description="Interaction with UBQLN4" evidence="3">
    <location>
        <begin position="264"/>
        <end position="382"/>
    </location>
</feature>
<feature type="region of interest" description="Disordered" evidence="6">
    <location>
        <begin position="279"/>
        <end position="300"/>
    </location>
</feature>
<feature type="region of interest" description="Disordered" evidence="6">
    <location>
        <begin position="317"/>
        <end position="382"/>
    </location>
</feature>
<feature type="compositionally biased region" description="Polar residues" evidence="6">
    <location>
        <begin position="317"/>
        <end position="332"/>
    </location>
</feature>
<feature type="compositionally biased region" description="Low complexity" evidence="6">
    <location>
        <begin position="362"/>
        <end position="374"/>
    </location>
</feature>
<feature type="modified residue" description="Phosphoserine" evidence="1">
    <location>
        <position position="5"/>
    </location>
</feature>
<feature type="modified residue" description="Phosphotyrosine" evidence="3">
    <location>
        <position position="247"/>
    </location>
</feature>
<feature type="modified residue" description="Phosphoserine" evidence="2">
    <location>
        <position position="255"/>
    </location>
</feature>
<feature type="modified residue" description="Phosphoserine" evidence="2">
    <location>
        <position position="262"/>
    </location>
</feature>
<feature type="modified residue" description="S-nitrosocysteine" evidence="3">
    <location>
        <position position="271"/>
    </location>
</feature>
<feature type="modified residue" description="Phosphothreonine" evidence="3">
    <location>
        <position position="275"/>
    </location>
</feature>
<feature type="modified residue" description="Phosphoserine" evidence="3">
    <location>
        <position position="306"/>
    </location>
</feature>
<feature type="modified residue" description="Phosphoserine" evidence="2">
    <location>
        <position position="314"/>
    </location>
</feature>
<feature type="modified residue" description="Phosphoserine; by CK1" evidence="2">
    <location>
        <position position="325"/>
    </location>
</feature>
<feature type="modified residue" description="Phosphothreonine" evidence="3">
    <location>
        <position position="326"/>
    </location>
</feature>
<feature type="modified residue" description="Phosphoserine; by CK1" evidence="2">
    <location>
        <position position="328"/>
    </location>
</feature>
<feature type="modified residue" description="Phosphoserine; by CK1" evidence="2">
    <location>
        <position position="330"/>
    </location>
</feature>
<feature type="modified residue" description="Phosphoserine" evidence="2">
    <location>
        <position position="344"/>
    </location>
</feature>
<feature type="modified residue" description="Phosphoserine" evidence="3">
    <location>
        <position position="365"/>
    </location>
</feature>
<feature type="modified residue" description="Phosphoserine; by PKC/PRKCG and PKC/PRKCD" evidence="3">
    <location>
        <position position="368"/>
    </location>
</feature>
<feature type="modified residue" description="Phosphoserine" evidence="3">
    <location>
        <position position="369"/>
    </location>
</feature>
<feature type="modified residue" description="Phosphoserine" evidence="1">
    <location>
        <position position="373"/>
    </location>
</feature>
<feature type="disulfide bond" evidence="2">
    <location>
        <begin position="54"/>
        <end position="192"/>
    </location>
</feature>
<feature type="disulfide bond" evidence="2">
    <location>
        <begin position="187"/>
        <end position="198"/>
    </location>
</feature>
<feature type="cross-link" description="Glycyl lysine isopeptide (Lys-Gly) (interchain with G-Cter in SUMO)" evidence="2">
    <location>
        <position position="144"/>
    </location>
</feature>
<feature type="cross-link" description="Glycyl lysine isopeptide (Lys-Gly) (interchain with G-Cter in SUMO)" evidence="2">
    <location>
        <position position="237"/>
    </location>
</feature>
<comment type="function">
    <text evidence="1 3">Gap junction protein that acts as a regulator of bladder capacity. A gap junction consists of a cluster of closely packed pairs of transmembrane channels, the connexons, through which materials of low MW diffuse from one cell to a neighboring cell. May play a critical role in the physiology of hearing by participating in the recycling of potassium to the cochlear endolymph. Negative regulator of bladder functional capacity: acts by enhancing intercellular electrical and chemical transmission, thus sensitizing bladder muscles to cholinergic neural stimuli and causing them to contract. May play a role in cell growth inhibition through the regulation of NOV expression and localization. Plays an essential role in gap junction communication in the ventricles (By similarity).</text>
</comment>
<comment type="subunit">
    <text evidence="1 2 3">A connexon is composed of a hexamer of connexins. Interacts with SGSM3 (By similarity). Interacts with RIC1/CIP150 (By similarity). Interacts with CNST and CSNK1D (By similarity). Interacts (via C-terminus) with TJP1. Interacts (via C-terminus) with SRC (via SH3 domain). Interacts (not ubiquitinated) with UBQLN4 (via UBA domain) (By similarity). Interacts with NOV. Interacts with TMEM65 (By similarity). Interacts with ANK3/ANKG and PKP2 (By similarity).</text>
</comment>
<comment type="subcellular location">
    <subcellularLocation>
        <location evidence="2">Cell membrane</location>
        <topology evidence="5">Multi-pass membrane protein</topology>
    </subcellularLocation>
    <subcellularLocation>
        <location evidence="2">Cell junction</location>
        <location evidence="2">Gap junction</location>
    </subcellularLocation>
    <subcellularLocation>
        <location evidence="3">Endoplasmic reticulum</location>
    </subcellularLocation>
    <text evidence="3">Localizes at the intercalated disk (ICD) in cardiomyocytes and the proper localization at ICD is dependent on TMEM65.</text>
</comment>
<comment type="PTM">
    <text evidence="1 2 4">Phosphorylation at Ser-325, Ser-328 and Ser-330 by CK1 modulates gap junction assembly. Phosphorylated at Ser-368 by PRKCG; phosphorylation induces disassembly of gap junction plaques and inhibition of gap junction activity. Phosphorylation at Ser-368 by PRKCD triggers its internalization into small vesicles leading to proteasome-mediated degradation (By similarity).</text>
</comment>
<comment type="PTM">
    <text evidence="2">Sumoylated with SUMO1, SUMO2 and SUMO3, which may regulate the level of functional Cx43 gap junctions at the plasma membrane. May be desumoylated by SENP1 or SENP2 (By similarity).</text>
</comment>
<comment type="PTM">
    <text evidence="3">S-nitrosylation at Cys-271 is enriched at the muscle endothelial gap junction in arteries, it augments channel permeability and may regulate of smooth muscle cell to endothelial cell communication.</text>
</comment>
<comment type="PTM">
    <text evidence="3">Acetylated in the developing cortex; leading to delocalization from the cell membrane.</text>
</comment>
<comment type="similarity">
    <text evidence="7">Belongs to the connexin family. Alpha-type (group II) subfamily.</text>
</comment>
<accession>Q4R4S7</accession>
<sequence>MGDWSALGKLLDKVQAYSTAGGKVWLSVLFIFRILLLGTAVESAWGDEQSAFRCNTQQPGCENVCYDKSFPISHVRFWVLQIIFVSVPTLLYLAHVFYVMRKEEKLNKKEEELKVAQTDGVNVEMHLKQIEIKKFKYGIEEHGKVKMRGGLLRTYIISILFKSIFEVAFLLIQWYIYGFSLSAVYTCKRDPCPHQVDCFLSRPTEKTIFIIFMLVVSLVSLALNIIELFYVFFKGVKDRVKGKSDPYHATSGALSPTKDCGSQKYAYFNGCSSPTAPLSPMSPPGYKPVTGDRNNSSCRNYNKQASEQNWANYSAEQNRMGQAGSTISNSHAQPFDFPDDNQNSKKLAAGHELQPLAIVDQRPSSRASSRASSRPRPDDLEI</sequence>
<protein>
    <recommendedName>
        <fullName>Gap junction alpha-1 protein</fullName>
    </recommendedName>
    <alternativeName>
        <fullName>Connexin-43</fullName>
        <shortName>Cx43</shortName>
    </alternativeName>
</protein>
<reference key="1">
    <citation type="submission" date="2005-06" db="EMBL/GenBank/DDBJ databases">
        <title>DNA sequences of macaque genes expressed in brain or testis and its evolutionary implications.</title>
        <authorList>
            <consortium name="International consortium for macaque cDNA sequencing and analysis"/>
        </authorList>
    </citation>
    <scope>NUCLEOTIDE SEQUENCE [LARGE SCALE MRNA]</scope>
    <source>
        <tissue>Frontal cortex</tissue>
    </source>
</reference>
<name>CXA1_MACFA</name>
<proteinExistence type="evidence at transcript level"/>
<dbReference type="EMBL" id="AB169817">
    <property type="protein sequence ID" value="BAE01898.1"/>
    <property type="molecule type" value="mRNA"/>
</dbReference>
<dbReference type="RefSeq" id="NP_001270691.1">
    <property type="nucleotide sequence ID" value="NM_001283762.1"/>
</dbReference>
<dbReference type="SMR" id="Q4R4S7"/>
<dbReference type="eggNOG" id="ENOG502QRAE">
    <property type="taxonomic scope" value="Eukaryota"/>
</dbReference>
<dbReference type="Proteomes" id="UP000233100">
    <property type="component" value="Unplaced"/>
</dbReference>
<dbReference type="GO" id="GO:0016324">
    <property type="term" value="C:apical plasma membrane"/>
    <property type="evidence" value="ECO:0000250"/>
    <property type="project" value="UniProtKB"/>
</dbReference>
<dbReference type="GO" id="GO:0005922">
    <property type="term" value="C:connexin complex"/>
    <property type="evidence" value="ECO:0000250"/>
    <property type="project" value="UniProtKB"/>
</dbReference>
<dbReference type="GO" id="GO:0005783">
    <property type="term" value="C:endoplasmic reticulum"/>
    <property type="evidence" value="ECO:0007669"/>
    <property type="project" value="UniProtKB-SubCell"/>
</dbReference>
<dbReference type="GO" id="GO:0014704">
    <property type="term" value="C:intercalated disc"/>
    <property type="evidence" value="ECO:0000250"/>
    <property type="project" value="UniProtKB"/>
</dbReference>
<dbReference type="GO" id="GO:0005886">
    <property type="term" value="C:plasma membrane"/>
    <property type="evidence" value="ECO:0000250"/>
    <property type="project" value="UniProtKB"/>
</dbReference>
<dbReference type="GO" id="GO:0005243">
    <property type="term" value="F:gap junction channel activity"/>
    <property type="evidence" value="ECO:0007669"/>
    <property type="project" value="TreeGrafter"/>
</dbReference>
<dbReference type="GO" id="GO:0015631">
    <property type="term" value="F:tubulin binding"/>
    <property type="evidence" value="ECO:0000250"/>
    <property type="project" value="UniProtKB"/>
</dbReference>
<dbReference type="GO" id="GO:0060348">
    <property type="term" value="P:bone development"/>
    <property type="evidence" value="ECO:0000250"/>
    <property type="project" value="UniProtKB"/>
</dbReference>
<dbReference type="GO" id="GO:0046849">
    <property type="term" value="P:bone remodeling"/>
    <property type="evidence" value="ECO:0000250"/>
    <property type="project" value="UniProtKB"/>
</dbReference>
<dbReference type="GO" id="GO:0010644">
    <property type="term" value="P:cell communication by electrical coupling"/>
    <property type="evidence" value="ECO:0007669"/>
    <property type="project" value="TreeGrafter"/>
</dbReference>
<dbReference type="GO" id="GO:0007267">
    <property type="term" value="P:cell-cell signaling"/>
    <property type="evidence" value="ECO:0007669"/>
    <property type="project" value="InterPro"/>
</dbReference>
<dbReference type="GO" id="GO:0007507">
    <property type="term" value="P:heart development"/>
    <property type="evidence" value="ECO:0007669"/>
    <property type="project" value="InterPro"/>
</dbReference>
<dbReference type="GO" id="GO:0030308">
    <property type="term" value="P:negative regulation of cell growth"/>
    <property type="evidence" value="ECO:0000250"/>
    <property type="project" value="UniProtKB"/>
</dbReference>
<dbReference type="GO" id="GO:0042981">
    <property type="term" value="P:regulation of apoptotic process"/>
    <property type="evidence" value="ECO:0000250"/>
    <property type="project" value="UniProtKB"/>
</dbReference>
<dbReference type="GO" id="GO:0007283">
    <property type="term" value="P:spermatogenesis"/>
    <property type="evidence" value="ECO:0000250"/>
    <property type="project" value="UniProtKB"/>
</dbReference>
<dbReference type="FunFam" id="1.20.1440.80:FF:000001">
    <property type="entry name" value="Gap junction alpha-1"/>
    <property type="match status" value="1"/>
</dbReference>
<dbReference type="FunFam" id="1.20.5.1130:FF:000001">
    <property type="entry name" value="Gap junction alpha-1"/>
    <property type="match status" value="1"/>
</dbReference>
<dbReference type="Gene3D" id="1.20.5.1130">
    <property type="entry name" value="Connexin43"/>
    <property type="match status" value="1"/>
</dbReference>
<dbReference type="Gene3D" id="1.20.1440.80">
    <property type="entry name" value="Gap junction channel protein cysteine-rich domain"/>
    <property type="match status" value="1"/>
</dbReference>
<dbReference type="InterPro" id="IPR035091">
    <property type="entry name" value="Alpha_helix_dom_sf"/>
</dbReference>
<dbReference type="InterPro" id="IPR000500">
    <property type="entry name" value="Connexin"/>
</dbReference>
<dbReference type="InterPro" id="IPR002261">
    <property type="entry name" value="Connexin43"/>
</dbReference>
<dbReference type="InterPro" id="IPR013124">
    <property type="entry name" value="Connexin43_C"/>
</dbReference>
<dbReference type="InterPro" id="IPR034634">
    <property type="entry name" value="Connexin_C"/>
</dbReference>
<dbReference type="InterPro" id="IPR019570">
    <property type="entry name" value="Connexin_CCC"/>
</dbReference>
<dbReference type="InterPro" id="IPR017990">
    <property type="entry name" value="Connexin_CS"/>
</dbReference>
<dbReference type="InterPro" id="IPR013092">
    <property type="entry name" value="Connexin_N"/>
</dbReference>
<dbReference type="InterPro" id="IPR038359">
    <property type="entry name" value="Connexin_N_sf"/>
</dbReference>
<dbReference type="PANTHER" id="PTHR11984">
    <property type="entry name" value="CONNEXIN"/>
    <property type="match status" value="1"/>
</dbReference>
<dbReference type="PANTHER" id="PTHR11984:SF33">
    <property type="entry name" value="GAP JUNCTION ALPHA-1 PROTEIN"/>
    <property type="match status" value="1"/>
</dbReference>
<dbReference type="Pfam" id="PF00029">
    <property type="entry name" value="Connexin"/>
    <property type="match status" value="1"/>
</dbReference>
<dbReference type="Pfam" id="PF03508">
    <property type="entry name" value="Connexin43"/>
    <property type="match status" value="1"/>
</dbReference>
<dbReference type="PRINTS" id="PR00206">
    <property type="entry name" value="CONNEXIN"/>
</dbReference>
<dbReference type="PRINTS" id="PR01132">
    <property type="entry name" value="CONNEXINA1"/>
</dbReference>
<dbReference type="SMART" id="SM00037">
    <property type="entry name" value="CNX"/>
    <property type="match status" value="1"/>
</dbReference>
<dbReference type="SMART" id="SM01089">
    <property type="entry name" value="Connexin_CCC"/>
    <property type="match status" value="1"/>
</dbReference>
<dbReference type="SUPFAM" id="SSF118220">
    <property type="entry name" value="Connexin43"/>
    <property type="match status" value="1"/>
</dbReference>
<dbReference type="PROSITE" id="PS00407">
    <property type="entry name" value="CONNEXINS_1"/>
    <property type="match status" value="1"/>
</dbReference>
<dbReference type="PROSITE" id="PS00408">
    <property type="entry name" value="CONNEXINS_2"/>
    <property type="match status" value="1"/>
</dbReference>
<organism>
    <name type="scientific">Macaca fascicularis</name>
    <name type="common">Crab-eating macaque</name>
    <name type="synonym">Cynomolgus monkey</name>
    <dbReference type="NCBI Taxonomy" id="9541"/>
    <lineage>
        <taxon>Eukaryota</taxon>
        <taxon>Metazoa</taxon>
        <taxon>Chordata</taxon>
        <taxon>Craniata</taxon>
        <taxon>Vertebrata</taxon>
        <taxon>Euteleostomi</taxon>
        <taxon>Mammalia</taxon>
        <taxon>Eutheria</taxon>
        <taxon>Euarchontoglires</taxon>
        <taxon>Primates</taxon>
        <taxon>Haplorrhini</taxon>
        <taxon>Catarrhini</taxon>
        <taxon>Cercopithecidae</taxon>
        <taxon>Cercopithecinae</taxon>
        <taxon>Macaca</taxon>
    </lineage>
</organism>
<evidence type="ECO:0000250" key="1">
    <source>
        <dbReference type="UniProtKB" id="P08050"/>
    </source>
</evidence>
<evidence type="ECO:0000250" key="2">
    <source>
        <dbReference type="UniProtKB" id="P17302"/>
    </source>
</evidence>
<evidence type="ECO:0000250" key="3">
    <source>
        <dbReference type="UniProtKB" id="P23242"/>
    </source>
</evidence>
<evidence type="ECO:0000250" key="4">
    <source>
        <dbReference type="UniProtKB" id="Q6TYA7"/>
    </source>
</evidence>
<evidence type="ECO:0000255" key="5"/>
<evidence type="ECO:0000256" key="6">
    <source>
        <dbReference type="SAM" id="MobiDB-lite"/>
    </source>
</evidence>
<evidence type="ECO:0000305" key="7"/>
<gene>
    <name type="primary">GJA1</name>
    <name type="ORF">QflA-10385</name>
</gene>